<sequence>MSKVIGIDLGTTNSCVAIMEGGEPIVIANSEGSRTTPSMVAFTEAGERIVGQQAKRQAVTNPENTLFAIKRLIGRKFETEAVKKDIAISPFKIVKADNGDAWVDVRDKKYSPPEISAIILQKMKKTAEDYLGETVTDAVITVPAYFDDSQRQATKDAGKIAGLNVLRIINEPTAAALAYGLDKKKDEKIAVFDLGGGTFDVSVLELGDGVFEVKSTNGDTFLGGEDFDQKIIDWIADEFKKDQGIDLRGDKMALQRLKEAAEKAKCELSGSMETDINLPFITADASGPKHLNLKLSRAKLESLCDDLLRKLEGPCRTAMKDAGLTASEIDEVILVGGMTRMPAVVQRVQEIFGKVPNKGVNPDEVVAIGAGIQGGVLKGDVKDVLLLDVTPLSLGIETLGGVLTRLIEKNTTIPCRKSQTFSTAADNQPAVSIHVLQGEREMARDNKTLGNFELTGIPPAPRGVPQIEVTFDIDANGIVHVSAKDLGTGKEQSIRITASSGLSKEEIDKMVKDAESHAAEDKKKREAIEARNQADSMIYSTEKSLKEVGDKVDAVEKGTIENKIADLKKVMDSDDAEVIKKATDELAQAAHKLAEAMYAQAQQAPGADSCGGDCGQQQEAGAKPKDEKVVDADFEEVKK</sequence>
<evidence type="ECO:0000255" key="1">
    <source>
        <dbReference type="HAMAP-Rule" id="MF_00332"/>
    </source>
</evidence>
<evidence type="ECO:0000256" key="2">
    <source>
        <dbReference type="SAM" id="MobiDB-lite"/>
    </source>
</evidence>
<name>DNAK_TRIL1</name>
<keyword id="KW-0067">ATP-binding</keyword>
<keyword id="KW-0143">Chaperone</keyword>
<keyword id="KW-0547">Nucleotide-binding</keyword>
<keyword id="KW-0597">Phosphoprotein</keyword>
<keyword id="KW-1185">Reference proteome</keyword>
<keyword id="KW-0346">Stress response</keyword>
<feature type="chain" id="PRO_1000119709" description="Chaperone protein DnaK">
    <location>
        <begin position="1"/>
        <end position="639"/>
    </location>
</feature>
<feature type="region of interest" description="Disordered" evidence="2">
    <location>
        <begin position="601"/>
        <end position="639"/>
    </location>
</feature>
<feature type="compositionally biased region" description="Basic and acidic residues" evidence="2">
    <location>
        <begin position="622"/>
        <end position="639"/>
    </location>
</feature>
<feature type="modified residue" description="Phosphothreonine; by autocatalysis" evidence="1">
    <location>
        <position position="198"/>
    </location>
</feature>
<comment type="function">
    <text evidence="1">Acts as a chaperone.</text>
</comment>
<comment type="induction">
    <text evidence="1">By stress conditions e.g. heat shock.</text>
</comment>
<comment type="similarity">
    <text evidence="1">Belongs to the heat shock protein 70 family.</text>
</comment>
<dbReference type="EMBL" id="CP001089">
    <property type="protein sequence ID" value="ACD96542.1"/>
    <property type="molecule type" value="Genomic_DNA"/>
</dbReference>
<dbReference type="RefSeq" id="WP_012470871.1">
    <property type="nucleotide sequence ID" value="NC_010814.1"/>
</dbReference>
<dbReference type="SMR" id="B3E7W9"/>
<dbReference type="STRING" id="398767.Glov_2829"/>
<dbReference type="KEGG" id="glo:Glov_2829"/>
<dbReference type="eggNOG" id="COG0443">
    <property type="taxonomic scope" value="Bacteria"/>
</dbReference>
<dbReference type="HOGENOM" id="CLU_005965_2_1_7"/>
<dbReference type="OrthoDB" id="9766019at2"/>
<dbReference type="Proteomes" id="UP000002420">
    <property type="component" value="Chromosome"/>
</dbReference>
<dbReference type="GO" id="GO:0005524">
    <property type="term" value="F:ATP binding"/>
    <property type="evidence" value="ECO:0007669"/>
    <property type="project" value="UniProtKB-UniRule"/>
</dbReference>
<dbReference type="GO" id="GO:0140662">
    <property type="term" value="F:ATP-dependent protein folding chaperone"/>
    <property type="evidence" value="ECO:0007669"/>
    <property type="project" value="InterPro"/>
</dbReference>
<dbReference type="GO" id="GO:0051082">
    <property type="term" value="F:unfolded protein binding"/>
    <property type="evidence" value="ECO:0007669"/>
    <property type="project" value="InterPro"/>
</dbReference>
<dbReference type="CDD" id="cd10234">
    <property type="entry name" value="ASKHA_NBD_HSP70_DnaK-like"/>
    <property type="match status" value="1"/>
</dbReference>
<dbReference type="FunFam" id="2.60.34.10:FF:000014">
    <property type="entry name" value="Chaperone protein DnaK HSP70"/>
    <property type="match status" value="1"/>
</dbReference>
<dbReference type="FunFam" id="3.30.420.40:FF:000020">
    <property type="entry name" value="Chaperone protein HscA homolog"/>
    <property type="match status" value="1"/>
</dbReference>
<dbReference type="FunFam" id="1.20.1270.10:FF:000001">
    <property type="entry name" value="Molecular chaperone DnaK"/>
    <property type="match status" value="1"/>
</dbReference>
<dbReference type="FunFam" id="3.30.420.40:FF:000004">
    <property type="entry name" value="Molecular chaperone DnaK"/>
    <property type="match status" value="1"/>
</dbReference>
<dbReference type="FunFam" id="3.90.640.10:FF:000003">
    <property type="entry name" value="Molecular chaperone DnaK"/>
    <property type="match status" value="1"/>
</dbReference>
<dbReference type="Gene3D" id="1.20.1270.10">
    <property type="match status" value="1"/>
</dbReference>
<dbReference type="Gene3D" id="3.30.420.40">
    <property type="match status" value="2"/>
</dbReference>
<dbReference type="Gene3D" id="3.90.640.10">
    <property type="entry name" value="Actin, Chain A, domain 4"/>
    <property type="match status" value="1"/>
</dbReference>
<dbReference type="Gene3D" id="2.60.34.10">
    <property type="entry name" value="Substrate Binding Domain Of DNAk, Chain A, domain 1"/>
    <property type="match status" value="1"/>
</dbReference>
<dbReference type="HAMAP" id="MF_00332">
    <property type="entry name" value="DnaK"/>
    <property type="match status" value="1"/>
</dbReference>
<dbReference type="InterPro" id="IPR043129">
    <property type="entry name" value="ATPase_NBD"/>
</dbReference>
<dbReference type="InterPro" id="IPR012725">
    <property type="entry name" value="Chaperone_DnaK"/>
</dbReference>
<dbReference type="InterPro" id="IPR018181">
    <property type="entry name" value="Heat_shock_70_CS"/>
</dbReference>
<dbReference type="InterPro" id="IPR029048">
    <property type="entry name" value="HSP70_C_sf"/>
</dbReference>
<dbReference type="InterPro" id="IPR029047">
    <property type="entry name" value="HSP70_peptide-bd_sf"/>
</dbReference>
<dbReference type="InterPro" id="IPR013126">
    <property type="entry name" value="Hsp_70_fam"/>
</dbReference>
<dbReference type="NCBIfam" id="NF001413">
    <property type="entry name" value="PRK00290.1"/>
    <property type="match status" value="1"/>
</dbReference>
<dbReference type="NCBIfam" id="NF003520">
    <property type="entry name" value="PRK05183.1"/>
    <property type="match status" value="1"/>
</dbReference>
<dbReference type="NCBIfam" id="TIGR02350">
    <property type="entry name" value="prok_dnaK"/>
    <property type="match status" value="1"/>
</dbReference>
<dbReference type="PANTHER" id="PTHR19375">
    <property type="entry name" value="HEAT SHOCK PROTEIN 70KDA"/>
    <property type="match status" value="1"/>
</dbReference>
<dbReference type="Pfam" id="PF00012">
    <property type="entry name" value="HSP70"/>
    <property type="match status" value="1"/>
</dbReference>
<dbReference type="PRINTS" id="PR00301">
    <property type="entry name" value="HEATSHOCK70"/>
</dbReference>
<dbReference type="SUPFAM" id="SSF53067">
    <property type="entry name" value="Actin-like ATPase domain"/>
    <property type="match status" value="2"/>
</dbReference>
<dbReference type="SUPFAM" id="SSF100934">
    <property type="entry name" value="Heat shock protein 70kD (HSP70), C-terminal subdomain"/>
    <property type="match status" value="1"/>
</dbReference>
<dbReference type="SUPFAM" id="SSF100920">
    <property type="entry name" value="Heat shock protein 70kD (HSP70), peptide-binding domain"/>
    <property type="match status" value="1"/>
</dbReference>
<dbReference type="PROSITE" id="PS00297">
    <property type="entry name" value="HSP70_1"/>
    <property type="match status" value="1"/>
</dbReference>
<dbReference type="PROSITE" id="PS00329">
    <property type="entry name" value="HSP70_2"/>
    <property type="match status" value="1"/>
</dbReference>
<dbReference type="PROSITE" id="PS01036">
    <property type="entry name" value="HSP70_3"/>
    <property type="match status" value="1"/>
</dbReference>
<reference key="1">
    <citation type="submission" date="2008-05" db="EMBL/GenBank/DDBJ databases">
        <title>Complete sequence of chromosome of Geobacter lovleyi SZ.</title>
        <authorList>
            <consortium name="US DOE Joint Genome Institute"/>
            <person name="Lucas S."/>
            <person name="Copeland A."/>
            <person name="Lapidus A."/>
            <person name="Glavina del Rio T."/>
            <person name="Dalin E."/>
            <person name="Tice H."/>
            <person name="Bruce D."/>
            <person name="Goodwin L."/>
            <person name="Pitluck S."/>
            <person name="Chertkov O."/>
            <person name="Meincke L."/>
            <person name="Brettin T."/>
            <person name="Detter J.C."/>
            <person name="Han C."/>
            <person name="Tapia R."/>
            <person name="Kuske C.R."/>
            <person name="Schmutz J."/>
            <person name="Larimer F."/>
            <person name="Land M."/>
            <person name="Hauser L."/>
            <person name="Kyrpides N."/>
            <person name="Mikhailova N."/>
            <person name="Sung Y."/>
            <person name="Fletcher K.E."/>
            <person name="Ritalahti K.M."/>
            <person name="Loeffler F.E."/>
            <person name="Richardson P."/>
        </authorList>
    </citation>
    <scope>NUCLEOTIDE SEQUENCE [LARGE SCALE GENOMIC DNA]</scope>
    <source>
        <strain>ATCC BAA-1151 / DSM 17278 / SZ</strain>
    </source>
</reference>
<accession>B3E7W9</accession>
<gene>
    <name evidence="1" type="primary">dnaK</name>
    <name type="ordered locus">Glov_2829</name>
</gene>
<protein>
    <recommendedName>
        <fullName evidence="1">Chaperone protein DnaK</fullName>
    </recommendedName>
    <alternativeName>
        <fullName evidence="1">HSP70</fullName>
    </alternativeName>
    <alternativeName>
        <fullName evidence="1">Heat shock 70 kDa protein</fullName>
    </alternativeName>
    <alternativeName>
        <fullName evidence="1">Heat shock protein 70</fullName>
    </alternativeName>
</protein>
<organism>
    <name type="scientific">Trichlorobacter lovleyi (strain ATCC BAA-1151 / DSM 17278 / SZ)</name>
    <name type="common">Geobacter lovleyi</name>
    <dbReference type="NCBI Taxonomy" id="398767"/>
    <lineage>
        <taxon>Bacteria</taxon>
        <taxon>Pseudomonadati</taxon>
        <taxon>Thermodesulfobacteriota</taxon>
        <taxon>Desulfuromonadia</taxon>
        <taxon>Geobacterales</taxon>
        <taxon>Geobacteraceae</taxon>
        <taxon>Trichlorobacter</taxon>
    </lineage>
</organism>
<proteinExistence type="inferred from homology"/>